<proteinExistence type="inferred from homology"/>
<sequence length="459" mass="50746">MSFTLAIIGRPNVGKSTLFNRLVGQKLALVDDAPGVTRDRREGEGRLGDLNFTLIDTAGLDEGPKGSLTARMQEQTETAIELADALLFVFDARAGLTPNDRAFADFARRANKPVVLVANKSEGKSGEIGAMESYALGLGDPVQISAEHGEGMGELYDALRPLLPEPVEDEEDDEPADQSEEAIATRPIRVAIVGRPNAGKSTFINRLLGEERLLTSPEAGTTRDSIAVEVEWKGRDFRVFDTAGLRRRSRIEEKLEKLSVADALRAVRFAEVVVLMMDAQNRFEEQDLRIADLVEREGRALVIAVNKWDLIERQGGQIAQLRTDADHWLPQIKGVPIVATSGMLGEGVDRLMQAIQDAYAVWNRRVPTAALNRWFEQAISQNPPPAVSGRRLKLNYVTQTKARPPSFVVFCSRADAVPESYLRYLVNSLRGAFDLPGTPVRITLREKANPFAHKRKRKS</sequence>
<name>DER_RHOPT</name>
<comment type="function">
    <text evidence="1">GTPase that plays an essential role in the late steps of ribosome biogenesis.</text>
</comment>
<comment type="subunit">
    <text evidence="1">Associates with the 50S ribosomal subunit.</text>
</comment>
<comment type="similarity">
    <text evidence="1">Belongs to the TRAFAC class TrmE-Era-EngA-EngB-Septin-like GTPase superfamily. EngA (Der) GTPase family.</text>
</comment>
<dbReference type="EMBL" id="CP001096">
    <property type="protein sequence ID" value="ACF02006.1"/>
    <property type="molecule type" value="Genomic_DNA"/>
</dbReference>
<dbReference type="RefSeq" id="WP_011158640.1">
    <property type="nucleotide sequence ID" value="NC_011004.1"/>
</dbReference>
<dbReference type="SMR" id="B3Q9V3"/>
<dbReference type="GeneID" id="66894177"/>
<dbReference type="KEGG" id="rpt:Rpal_3505"/>
<dbReference type="HOGENOM" id="CLU_016077_5_0_5"/>
<dbReference type="OrthoDB" id="9805918at2"/>
<dbReference type="Proteomes" id="UP000001725">
    <property type="component" value="Chromosome"/>
</dbReference>
<dbReference type="GO" id="GO:0005525">
    <property type="term" value="F:GTP binding"/>
    <property type="evidence" value="ECO:0007669"/>
    <property type="project" value="UniProtKB-UniRule"/>
</dbReference>
<dbReference type="GO" id="GO:0042254">
    <property type="term" value="P:ribosome biogenesis"/>
    <property type="evidence" value="ECO:0007669"/>
    <property type="project" value="UniProtKB-KW"/>
</dbReference>
<dbReference type="CDD" id="cd01894">
    <property type="entry name" value="EngA1"/>
    <property type="match status" value="1"/>
</dbReference>
<dbReference type="CDD" id="cd01895">
    <property type="entry name" value="EngA2"/>
    <property type="match status" value="1"/>
</dbReference>
<dbReference type="FunFam" id="3.30.300.20:FF:000004">
    <property type="entry name" value="GTPase Der"/>
    <property type="match status" value="1"/>
</dbReference>
<dbReference type="FunFam" id="3.40.50.300:FF:000040">
    <property type="entry name" value="GTPase Der"/>
    <property type="match status" value="1"/>
</dbReference>
<dbReference type="FunFam" id="3.40.50.300:FF:000057">
    <property type="entry name" value="GTPase Der"/>
    <property type="match status" value="1"/>
</dbReference>
<dbReference type="Gene3D" id="3.30.300.20">
    <property type="match status" value="1"/>
</dbReference>
<dbReference type="Gene3D" id="3.40.50.300">
    <property type="entry name" value="P-loop containing nucleotide triphosphate hydrolases"/>
    <property type="match status" value="2"/>
</dbReference>
<dbReference type="HAMAP" id="MF_00195">
    <property type="entry name" value="GTPase_Der"/>
    <property type="match status" value="1"/>
</dbReference>
<dbReference type="InterPro" id="IPR031166">
    <property type="entry name" value="G_ENGA"/>
</dbReference>
<dbReference type="InterPro" id="IPR006073">
    <property type="entry name" value="GTP-bd"/>
</dbReference>
<dbReference type="InterPro" id="IPR016484">
    <property type="entry name" value="GTPase_Der"/>
</dbReference>
<dbReference type="InterPro" id="IPR032859">
    <property type="entry name" value="KH_dom-like"/>
</dbReference>
<dbReference type="InterPro" id="IPR015946">
    <property type="entry name" value="KH_dom-like_a/b"/>
</dbReference>
<dbReference type="InterPro" id="IPR027417">
    <property type="entry name" value="P-loop_NTPase"/>
</dbReference>
<dbReference type="InterPro" id="IPR005225">
    <property type="entry name" value="Small_GTP-bd"/>
</dbReference>
<dbReference type="NCBIfam" id="TIGR03594">
    <property type="entry name" value="GTPase_EngA"/>
    <property type="match status" value="1"/>
</dbReference>
<dbReference type="NCBIfam" id="TIGR00231">
    <property type="entry name" value="small_GTP"/>
    <property type="match status" value="2"/>
</dbReference>
<dbReference type="PANTHER" id="PTHR43834">
    <property type="entry name" value="GTPASE DER"/>
    <property type="match status" value="1"/>
</dbReference>
<dbReference type="PANTHER" id="PTHR43834:SF6">
    <property type="entry name" value="GTPASE DER"/>
    <property type="match status" value="1"/>
</dbReference>
<dbReference type="Pfam" id="PF14714">
    <property type="entry name" value="KH_dom-like"/>
    <property type="match status" value="1"/>
</dbReference>
<dbReference type="Pfam" id="PF01926">
    <property type="entry name" value="MMR_HSR1"/>
    <property type="match status" value="2"/>
</dbReference>
<dbReference type="PIRSF" id="PIRSF006485">
    <property type="entry name" value="GTP-binding_EngA"/>
    <property type="match status" value="1"/>
</dbReference>
<dbReference type="PRINTS" id="PR00326">
    <property type="entry name" value="GTP1OBG"/>
</dbReference>
<dbReference type="SUPFAM" id="SSF52540">
    <property type="entry name" value="P-loop containing nucleoside triphosphate hydrolases"/>
    <property type="match status" value="2"/>
</dbReference>
<dbReference type="PROSITE" id="PS51712">
    <property type="entry name" value="G_ENGA"/>
    <property type="match status" value="2"/>
</dbReference>
<evidence type="ECO:0000255" key="1">
    <source>
        <dbReference type="HAMAP-Rule" id="MF_00195"/>
    </source>
</evidence>
<reference key="1">
    <citation type="submission" date="2008-05" db="EMBL/GenBank/DDBJ databases">
        <title>Complete sequence of Rhodopseudomonas palustris TIE-1.</title>
        <authorList>
            <consortium name="US DOE Joint Genome Institute"/>
            <person name="Lucas S."/>
            <person name="Copeland A."/>
            <person name="Lapidus A."/>
            <person name="Glavina del Rio T."/>
            <person name="Dalin E."/>
            <person name="Tice H."/>
            <person name="Pitluck S."/>
            <person name="Chain P."/>
            <person name="Malfatti S."/>
            <person name="Shin M."/>
            <person name="Vergez L."/>
            <person name="Lang D."/>
            <person name="Schmutz J."/>
            <person name="Larimer F."/>
            <person name="Land M."/>
            <person name="Hauser L."/>
            <person name="Kyrpides N."/>
            <person name="Mikhailova N."/>
            <person name="Emerson D."/>
            <person name="Newman D.K."/>
            <person name="Roden E."/>
            <person name="Richardson P."/>
        </authorList>
    </citation>
    <scope>NUCLEOTIDE SEQUENCE [LARGE SCALE GENOMIC DNA]</scope>
    <source>
        <strain>TIE-1</strain>
    </source>
</reference>
<feature type="chain" id="PRO_1000099155" description="GTPase Der">
    <location>
        <begin position="1"/>
        <end position="459"/>
    </location>
</feature>
<feature type="domain" description="EngA-type G 1">
    <location>
        <begin position="3"/>
        <end position="167"/>
    </location>
</feature>
<feature type="domain" description="EngA-type G 2">
    <location>
        <begin position="188"/>
        <end position="363"/>
    </location>
</feature>
<feature type="domain" description="KH-like" evidence="1">
    <location>
        <begin position="364"/>
        <end position="448"/>
    </location>
</feature>
<feature type="binding site" evidence="1">
    <location>
        <begin position="9"/>
        <end position="16"/>
    </location>
    <ligand>
        <name>GTP</name>
        <dbReference type="ChEBI" id="CHEBI:37565"/>
        <label>1</label>
    </ligand>
</feature>
<feature type="binding site" evidence="1">
    <location>
        <begin position="56"/>
        <end position="60"/>
    </location>
    <ligand>
        <name>GTP</name>
        <dbReference type="ChEBI" id="CHEBI:37565"/>
        <label>1</label>
    </ligand>
</feature>
<feature type="binding site" evidence="1">
    <location>
        <begin position="119"/>
        <end position="122"/>
    </location>
    <ligand>
        <name>GTP</name>
        <dbReference type="ChEBI" id="CHEBI:37565"/>
        <label>1</label>
    </ligand>
</feature>
<feature type="binding site" evidence="1">
    <location>
        <begin position="194"/>
        <end position="201"/>
    </location>
    <ligand>
        <name>GTP</name>
        <dbReference type="ChEBI" id="CHEBI:37565"/>
        <label>2</label>
    </ligand>
</feature>
<feature type="binding site" evidence="1">
    <location>
        <begin position="241"/>
        <end position="245"/>
    </location>
    <ligand>
        <name>GTP</name>
        <dbReference type="ChEBI" id="CHEBI:37565"/>
        <label>2</label>
    </ligand>
</feature>
<feature type="binding site" evidence="1">
    <location>
        <begin position="306"/>
        <end position="309"/>
    </location>
    <ligand>
        <name>GTP</name>
        <dbReference type="ChEBI" id="CHEBI:37565"/>
        <label>2</label>
    </ligand>
</feature>
<accession>B3Q9V3</accession>
<organism>
    <name type="scientific">Rhodopseudomonas palustris (strain TIE-1)</name>
    <dbReference type="NCBI Taxonomy" id="395960"/>
    <lineage>
        <taxon>Bacteria</taxon>
        <taxon>Pseudomonadati</taxon>
        <taxon>Pseudomonadota</taxon>
        <taxon>Alphaproteobacteria</taxon>
        <taxon>Hyphomicrobiales</taxon>
        <taxon>Nitrobacteraceae</taxon>
        <taxon>Rhodopseudomonas</taxon>
    </lineage>
</organism>
<gene>
    <name evidence="1" type="primary">der</name>
    <name type="synonym">engA</name>
    <name type="ordered locus">Rpal_3505</name>
</gene>
<protein>
    <recommendedName>
        <fullName evidence="1">GTPase Der</fullName>
    </recommendedName>
    <alternativeName>
        <fullName evidence="1">GTP-binding protein EngA</fullName>
    </alternativeName>
</protein>
<keyword id="KW-0342">GTP-binding</keyword>
<keyword id="KW-0547">Nucleotide-binding</keyword>
<keyword id="KW-0677">Repeat</keyword>
<keyword id="KW-0690">Ribosome biogenesis</keyword>